<proteinExistence type="evidence at protein level"/>
<reference key="1">
    <citation type="journal article" date="1997" name="DNA Res.">
        <title>Construction of a contiguous 874-kb sequence of the Escherichia coli-K12 genome corresponding to 50.0-68.8 min on the linkage map and analysis of its sequence features.</title>
        <authorList>
            <person name="Yamamoto Y."/>
            <person name="Aiba H."/>
            <person name="Baba T."/>
            <person name="Hayashi K."/>
            <person name="Inada T."/>
            <person name="Isono K."/>
            <person name="Itoh T."/>
            <person name="Kimura S."/>
            <person name="Kitagawa M."/>
            <person name="Makino K."/>
            <person name="Miki T."/>
            <person name="Mitsuhashi N."/>
            <person name="Mizobuchi K."/>
            <person name="Mori H."/>
            <person name="Nakade S."/>
            <person name="Nakamura Y."/>
            <person name="Nashimoto H."/>
            <person name="Oshima T."/>
            <person name="Oyama S."/>
            <person name="Saito N."/>
            <person name="Sampei G."/>
            <person name="Satoh Y."/>
            <person name="Sivasundaram S."/>
            <person name="Tagami H."/>
            <person name="Takahashi H."/>
            <person name="Takeda J."/>
            <person name="Takemoto K."/>
            <person name="Uehara K."/>
            <person name="Wada C."/>
            <person name="Yamagata S."/>
            <person name="Horiuchi T."/>
        </authorList>
    </citation>
    <scope>NUCLEOTIDE SEQUENCE [LARGE SCALE GENOMIC DNA]</scope>
    <source>
        <strain>K12 / W3110 / ATCC 27325 / DSM 5911</strain>
    </source>
</reference>
<reference key="2">
    <citation type="journal article" date="1997" name="Science">
        <title>The complete genome sequence of Escherichia coli K-12.</title>
        <authorList>
            <person name="Blattner F.R."/>
            <person name="Plunkett G. III"/>
            <person name="Bloch C.A."/>
            <person name="Perna N.T."/>
            <person name="Burland V."/>
            <person name="Riley M."/>
            <person name="Collado-Vides J."/>
            <person name="Glasner J.D."/>
            <person name="Rode C.K."/>
            <person name="Mayhew G.F."/>
            <person name="Gregor J."/>
            <person name="Davis N.W."/>
            <person name="Kirkpatrick H.A."/>
            <person name="Goeden M.A."/>
            <person name="Rose D.J."/>
            <person name="Mau B."/>
            <person name="Shao Y."/>
        </authorList>
    </citation>
    <scope>NUCLEOTIDE SEQUENCE [LARGE SCALE GENOMIC DNA]</scope>
    <source>
        <strain>K12 / MG1655 / ATCC 47076</strain>
    </source>
</reference>
<reference key="3">
    <citation type="journal article" date="2006" name="Mol. Syst. Biol.">
        <title>Highly accurate genome sequences of Escherichia coli K-12 strains MG1655 and W3110.</title>
        <authorList>
            <person name="Hayashi K."/>
            <person name="Morooka N."/>
            <person name="Yamamoto Y."/>
            <person name="Fujita K."/>
            <person name="Isono K."/>
            <person name="Choi S."/>
            <person name="Ohtsubo E."/>
            <person name="Baba T."/>
            <person name="Wanner B.L."/>
            <person name="Mori H."/>
            <person name="Horiuchi T."/>
        </authorList>
    </citation>
    <scope>NUCLEOTIDE SEQUENCE [LARGE SCALE GENOMIC DNA]</scope>
    <source>
        <strain>K12 / W3110 / ATCC 27325 / DSM 5911</strain>
    </source>
</reference>
<reference key="4">
    <citation type="journal article" date="2006" name="Arch. Microbiol.">
        <title>The DD-carboxypeptidase activity encoded by pbp4B is not essential for the cell growth of Escherichia coli.</title>
        <authorList>
            <person name="Vega D."/>
            <person name="Ayala J.A."/>
        </authorList>
    </citation>
    <scope>FUNCTION</scope>
    <scope>CATALYTIC ACTIVITY</scope>
    <scope>SUBCELLULAR LOCATION</scope>
    <scope>DISRUPTION PHENOTYPE</scope>
</reference>
<protein>
    <recommendedName>
        <fullName evidence="1 4">Putative D-alanyl-D-alanine carboxypeptidase</fullName>
        <ecNumber evidence="1 2">3.4.16.4</ecNumber>
    </recommendedName>
    <alternativeName>
        <fullName evidence="1 3">DD-carboxypeptidase</fullName>
        <shortName evidence="1 3">DD-CPase</shortName>
    </alternativeName>
    <alternativeName>
        <fullName evidence="4">Penicillin binding protein 4B</fullName>
    </alternativeName>
</protein>
<feature type="chain" id="PRO_0000036256" description="Putative D-alanyl-D-alanine carboxypeptidase">
    <location>
        <begin position="1"/>
        <end position="434"/>
    </location>
</feature>
<feature type="transmembrane region" description="Helical; Signal-anchor" evidence="1 5">
    <location>
        <begin position="7"/>
        <end position="25"/>
    </location>
</feature>
<keyword id="KW-0121">Carboxypeptidase</keyword>
<keyword id="KW-0997">Cell inner membrane</keyword>
<keyword id="KW-1003">Cell membrane</keyword>
<keyword id="KW-0378">Hydrolase</keyword>
<keyword id="KW-0472">Membrane</keyword>
<keyword id="KW-0645">Protease</keyword>
<keyword id="KW-1185">Reference proteome</keyword>
<keyword id="KW-0812">Transmembrane</keyword>
<keyword id="KW-1133">Transmembrane helix</keyword>
<gene>
    <name evidence="1" type="primary">yfeW</name>
    <name evidence="3" type="synonym">pbp4B</name>
    <name type="ordered locus">b2430</name>
    <name type="ordered locus">JW5395</name>
</gene>
<evidence type="ECO:0000255" key="1">
    <source>
        <dbReference type="HAMAP-Rule" id="MF_01034"/>
    </source>
</evidence>
<evidence type="ECO:0000269" key="2">
    <source>
    </source>
</evidence>
<evidence type="ECO:0000303" key="3">
    <source>
    </source>
</evidence>
<evidence type="ECO:0000305" key="4"/>
<evidence type="ECO:0000305" key="5">
    <source>
    </source>
</evidence>
<organism>
    <name type="scientific">Escherichia coli (strain K12)</name>
    <dbReference type="NCBI Taxonomy" id="83333"/>
    <lineage>
        <taxon>Bacteria</taxon>
        <taxon>Pseudomonadati</taxon>
        <taxon>Pseudomonadota</taxon>
        <taxon>Gammaproteobacteria</taxon>
        <taxon>Enterobacterales</taxon>
        <taxon>Enterobacteriaceae</taxon>
        <taxon>Escherichia</taxon>
    </lineage>
</organism>
<accession>P77619</accession>
<sequence length="434" mass="47752">MKRTMLYLSLLAVSCSVSAAKYPVLTESSPEKAGFNVERLNQMDRWISQQVDVGYPSVNLLIIKDNQIVYRKAWGAAKKYDGSVLMEQPVKATTGTLYDLASNTKMYATNFALQKLMSEGKLHPDDRIAKYIPGFADSPNDTIKGKNTLRISDLLHHSGGFPADPQYPNKAVAGALYSQDKGQTLEMIKRTPLEYQPGSKHIYSDVDYMLLGFIVESVTGQPLDRYVEESIYRPLGLTHTVFNPLLKGFKPQQIAATELNGNTRDGVIHFPNIRTSTLWGQVHDEKAFYSMGGVSGHAGLFSNTGDIAVLMQTMLNGGGYGDVQLFNAETVKMFTTSSKEDATFGLGWRVNGNATMTPTFGTLASPQTYGHTGWTGTVTVIDPVNHMTIVMLSNKPHSPVADPQKNPNMFESGQLPIATYGWVVDQVYAALKQK</sequence>
<name>YFEW_ECOLI</name>
<dbReference type="EC" id="3.4.16.4" evidence="1 2"/>
<dbReference type="EMBL" id="U00096">
    <property type="protein sequence ID" value="AAC75483.2"/>
    <property type="molecule type" value="Genomic_DNA"/>
</dbReference>
<dbReference type="EMBL" id="AP009048">
    <property type="protein sequence ID" value="BAA16314.2"/>
    <property type="molecule type" value="Genomic_DNA"/>
</dbReference>
<dbReference type="PIR" id="E65017">
    <property type="entry name" value="E65017"/>
</dbReference>
<dbReference type="RefSeq" id="NP_416925.2">
    <property type="nucleotide sequence ID" value="NC_000913.3"/>
</dbReference>
<dbReference type="RefSeq" id="WP_001327042.1">
    <property type="nucleotide sequence ID" value="NZ_LN832404.1"/>
</dbReference>
<dbReference type="SMR" id="P77619"/>
<dbReference type="BioGRID" id="4260747">
    <property type="interactions" value="342"/>
</dbReference>
<dbReference type="DIP" id="DIP-12021N"/>
<dbReference type="FunCoup" id="P77619">
    <property type="interactions" value="157"/>
</dbReference>
<dbReference type="STRING" id="511145.b2430"/>
<dbReference type="MEROPS" id="S12.A03"/>
<dbReference type="jPOST" id="P77619"/>
<dbReference type="PaxDb" id="511145-b2430"/>
<dbReference type="EnsemblBacteria" id="AAC75483">
    <property type="protein sequence ID" value="AAC75483"/>
    <property type="gene ID" value="b2430"/>
</dbReference>
<dbReference type="GeneID" id="946907"/>
<dbReference type="KEGG" id="ecj:JW5395"/>
<dbReference type="KEGG" id="eco:b2430"/>
<dbReference type="KEGG" id="ecoc:C3026_13500"/>
<dbReference type="PATRIC" id="fig|1411691.4.peg.4301"/>
<dbReference type="EchoBASE" id="EB3916"/>
<dbReference type="eggNOG" id="COG1680">
    <property type="taxonomic scope" value="Bacteria"/>
</dbReference>
<dbReference type="HOGENOM" id="CLU_020027_1_2_6"/>
<dbReference type="InParanoid" id="P77619"/>
<dbReference type="OMA" id="AGWAVRY"/>
<dbReference type="OrthoDB" id="119951at2"/>
<dbReference type="PhylomeDB" id="P77619"/>
<dbReference type="BioCyc" id="EcoCyc:G7265-MONOMER"/>
<dbReference type="BioCyc" id="MetaCyc:G7265-MONOMER"/>
<dbReference type="PRO" id="PR:P77619"/>
<dbReference type="Proteomes" id="UP000000625">
    <property type="component" value="Chromosome"/>
</dbReference>
<dbReference type="GO" id="GO:0005886">
    <property type="term" value="C:plasma membrane"/>
    <property type="evidence" value="ECO:0007669"/>
    <property type="project" value="UniProtKB-SubCell"/>
</dbReference>
<dbReference type="GO" id="GO:0008658">
    <property type="term" value="F:penicillin binding"/>
    <property type="evidence" value="ECO:0000314"/>
    <property type="project" value="EcoCyc"/>
</dbReference>
<dbReference type="GO" id="GO:0009002">
    <property type="term" value="F:serine-type D-Ala-D-Ala carboxypeptidase activity"/>
    <property type="evidence" value="ECO:0000314"/>
    <property type="project" value="EcoCyc"/>
</dbReference>
<dbReference type="GO" id="GO:0006508">
    <property type="term" value="P:proteolysis"/>
    <property type="evidence" value="ECO:0007669"/>
    <property type="project" value="UniProtKB-KW"/>
</dbReference>
<dbReference type="FunFam" id="3.40.710.10:FF:000049">
    <property type="entry name" value="Putative D-alanyl-D-alanine carboxypeptidase"/>
    <property type="match status" value="1"/>
</dbReference>
<dbReference type="Gene3D" id="3.40.710.10">
    <property type="entry name" value="DD-peptidase/beta-lactamase superfamily"/>
    <property type="match status" value="1"/>
</dbReference>
<dbReference type="HAMAP" id="MF_01034">
    <property type="entry name" value="S12_YfeW"/>
    <property type="match status" value="1"/>
</dbReference>
<dbReference type="InterPro" id="IPR001466">
    <property type="entry name" value="Beta-lactam-related"/>
</dbReference>
<dbReference type="InterPro" id="IPR012338">
    <property type="entry name" value="Beta-lactam/transpept-like"/>
</dbReference>
<dbReference type="InterPro" id="IPR050789">
    <property type="entry name" value="Diverse_Enzym_Activities"/>
</dbReference>
<dbReference type="InterPro" id="IPR022849">
    <property type="entry name" value="Pept_S12_YfeW/YbbE-like"/>
</dbReference>
<dbReference type="NCBIfam" id="NF002968">
    <property type="entry name" value="PRK03642.1"/>
    <property type="match status" value="1"/>
</dbReference>
<dbReference type="PANTHER" id="PTHR43283">
    <property type="entry name" value="BETA-LACTAMASE-RELATED"/>
    <property type="match status" value="1"/>
</dbReference>
<dbReference type="PANTHER" id="PTHR43283:SF11">
    <property type="entry name" value="BETA-LACTAMASE-RELATED DOMAIN-CONTAINING PROTEIN"/>
    <property type="match status" value="1"/>
</dbReference>
<dbReference type="Pfam" id="PF00144">
    <property type="entry name" value="Beta-lactamase"/>
    <property type="match status" value="1"/>
</dbReference>
<dbReference type="SUPFAM" id="SSF56601">
    <property type="entry name" value="beta-lactamase/transpeptidase-like"/>
    <property type="match status" value="1"/>
</dbReference>
<dbReference type="PROSITE" id="PS51257">
    <property type="entry name" value="PROKAR_LIPOPROTEIN"/>
    <property type="match status" value="1"/>
</dbReference>
<comment type="function">
    <text evidence="2">Penicillin-binding protein. Has low DD-carboxypeptidase activity.</text>
</comment>
<comment type="catalytic activity">
    <reaction evidence="1 2">
        <text>Preferential cleavage: (Ac)2-L-Lys-D-Ala-|-D-Ala. Also transpeptidation of peptidyl-alanyl moieties that are N-acyl substituents of D-alanine.</text>
        <dbReference type="EC" id="3.4.16.4"/>
    </reaction>
</comment>
<comment type="subcellular location">
    <subcellularLocation>
        <location evidence="1 5">Cell inner membrane</location>
        <topology evidence="1 5">Single-pass membrane protein</topology>
    </subcellularLocation>
</comment>
<comment type="disruption phenotype">
    <text evidence="2">Not essential for cell growth.</text>
</comment>
<comment type="similarity">
    <text evidence="1 4">Belongs to the peptidase S12 family. YfeW subfamily.</text>
</comment>